<accession>Q8CRU6</accession>
<comment type="similarity">
    <text evidence="3">Belongs to the class I-like SAM-binding methyltransferase superfamily. RNA M5U methyltransferase family.</text>
</comment>
<comment type="sequence caution" evidence="4">
    <conflict type="erroneous initiation">
        <sequence resource="EMBL-CDS" id="AAO05181"/>
    </conflict>
</comment>
<keyword id="KW-0004">4Fe-4S</keyword>
<keyword id="KW-0408">Iron</keyword>
<keyword id="KW-0411">Iron-sulfur</keyword>
<keyword id="KW-0479">Metal-binding</keyword>
<keyword id="KW-0489">Methyltransferase</keyword>
<keyword id="KW-0949">S-adenosyl-L-methionine</keyword>
<keyword id="KW-0808">Transferase</keyword>
<reference key="1">
    <citation type="journal article" date="2003" name="Mol. Microbiol.">
        <title>Genome-based analysis of virulence genes in a non-biofilm-forming Staphylococcus epidermidis strain (ATCC 12228).</title>
        <authorList>
            <person name="Zhang Y.-Q."/>
            <person name="Ren S.-X."/>
            <person name="Li H.-L."/>
            <person name="Wang Y.-X."/>
            <person name="Fu G."/>
            <person name="Yang J."/>
            <person name="Qin Z.-Q."/>
            <person name="Miao Y.-G."/>
            <person name="Wang W.-Y."/>
            <person name="Chen R.-S."/>
            <person name="Shen Y."/>
            <person name="Chen Z."/>
            <person name="Yuan Z.-H."/>
            <person name="Zhao G.-P."/>
            <person name="Qu D."/>
            <person name="Danchin A."/>
            <person name="Wen Y.-M."/>
        </authorList>
    </citation>
    <scope>NUCLEOTIDE SEQUENCE [LARGE SCALE GENOMIC DNA]</scope>
    <source>
        <strain>ATCC 12228 / FDA PCI 1200</strain>
    </source>
</reference>
<gene>
    <name type="ordered locus">SE_1582</name>
</gene>
<feature type="chain" id="PRO_0000162021" description="Uncharacterized RNA methyltransferase SE_1582">
    <location>
        <begin position="1"/>
        <end position="456"/>
    </location>
</feature>
<feature type="domain" description="TRAM" evidence="2">
    <location>
        <begin position="3"/>
        <end position="61"/>
    </location>
</feature>
<feature type="active site" description="Nucleophile" evidence="3">
    <location>
        <position position="411"/>
    </location>
</feature>
<feature type="binding site" evidence="1">
    <location>
        <position position="74"/>
    </location>
    <ligand>
        <name>[4Fe-4S] cluster</name>
        <dbReference type="ChEBI" id="CHEBI:49883"/>
    </ligand>
</feature>
<feature type="binding site" evidence="1">
    <location>
        <position position="80"/>
    </location>
    <ligand>
        <name>[4Fe-4S] cluster</name>
        <dbReference type="ChEBI" id="CHEBI:49883"/>
    </ligand>
</feature>
<feature type="binding site" evidence="1">
    <location>
        <position position="83"/>
    </location>
    <ligand>
        <name>[4Fe-4S] cluster</name>
        <dbReference type="ChEBI" id="CHEBI:49883"/>
    </ligand>
</feature>
<feature type="binding site" evidence="1">
    <location>
        <position position="162"/>
    </location>
    <ligand>
        <name>[4Fe-4S] cluster</name>
        <dbReference type="ChEBI" id="CHEBI:49883"/>
    </ligand>
</feature>
<feature type="binding site" evidence="3">
    <location>
        <position position="286"/>
    </location>
    <ligand>
        <name>S-adenosyl-L-methionine</name>
        <dbReference type="ChEBI" id="CHEBI:59789"/>
    </ligand>
</feature>
<feature type="binding site" evidence="3">
    <location>
        <position position="315"/>
    </location>
    <ligand>
        <name>S-adenosyl-L-methionine</name>
        <dbReference type="ChEBI" id="CHEBI:59789"/>
    </ligand>
</feature>
<feature type="binding site" evidence="3">
    <location>
        <position position="336"/>
    </location>
    <ligand>
        <name>S-adenosyl-L-methionine</name>
        <dbReference type="ChEBI" id="CHEBI:59789"/>
    </ligand>
</feature>
<feature type="binding site" evidence="3">
    <location>
        <position position="384"/>
    </location>
    <ligand>
        <name>S-adenosyl-L-methionine</name>
        <dbReference type="ChEBI" id="CHEBI:59789"/>
    </ligand>
</feature>
<organism>
    <name type="scientific">Staphylococcus epidermidis (strain ATCC 12228 / FDA PCI 1200)</name>
    <dbReference type="NCBI Taxonomy" id="176280"/>
    <lineage>
        <taxon>Bacteria</taxon>
        <taxon>Bacillati</taxon>
        <taxon>Bacillota</taxon>
        <taxon>Bacilli</taxon>
        <taxon>Bacillales</taxon>
        <taxon>Staphylococcaceae</taxon>
        <taxon>Staphylococcus</taxon>
    </lineage>
</organism>
<evidence type="ECO:0000250" key="1"/>
<evidence type="ECO:0000255" key="2">
    <source>
        <dbReference type="PROSITE-ProRule" id="PRU00208"/>
    </source>
</evidence>
<evidence type="ECO:0000255" key="3">
    <source>
        <dbReference type="PROSITE-ProRule" id="PRU01024"/>
    </source>
</evidence>
<evidence type="ECO:0000305" key="4"/>
<dbReference type="EC" id="2.1.1.-"/>
<dbReference type="EMBL" id="AE015929">
    <property type="protein sequence ID" value="AAO05181.1"/>
    <property type="status" value="ALT_INIT"/>
    <property type="molecule type" value="Genomic_DNA"/>
</dbReference>
<dbReference type="RefSeq" id="NP_765137.1">
    <property type="nucleotide sequence ID" value="NC_004461.1"/>
</dbReference>
<dbReference type="SMR" id="Q8CRU6"/>
<dbReference type="KEGG" id="sep:SE_1582"/>
<dbReference type="PATRIC" id="fig|176280.10.peg.1546"/>
<dbReference type="eggNOG" id="COG2265">
    <property type="taxonomic scope" value="Bacteria"/>
</dbReference>
<dbReference type="HOGENOM" id="CLU_014689_7_0_9"/>
<dbReference type="OrthoDB" id="9804590at2"/>
<dbReference type="Proteomes" id="UP000001411">
    <property type="component" value="Chromosome"/>
</dbReference>
<dbReference type="GO" id="GO:0051539">
    <property type="term" value="F:4 iron, 4 sulfur cluster binding"/>
    <property type="evidence" value="ECO:0007669"/>
    <property type="project" value="UniProtKB-KW"/>
</dbReference>
<dbReference type="GO" id="GO:0046872">
    <property type="term" value="F:metal ion binding"/>
    <property type="evidence" value="ECO:0007669"/>
    <property type="project" value="UniProtKB-KW"/>
</dbReference>
<dbReference type="GO" id="GO:0070041">
    <property type="term" value="F:rRNA (uridine-C5-)-methyltransferase activity"/>
    <property type="evidence" value="ECO:0007669"/>
    <property type="project" value="TreeGrafter"/>
</dbReference>
<dbReference type="GO" id="GO:0070475">
    <property type="term" value="P:rRNA base methylation"/>
    <property type="evidence" value="ECO:0007669"/>
    <property type="project" value="TreeGrafter"/>
</dbReference>
<dbReference type="CDD" id="cd02440">
    <property type="entry name" value="AdoMet_MTases"/>
    <property type="match status" value="1"/>
</dbReference>
<dbReference type="FunFam" id="3.40.50.150:FF:000009">
    <property type="entry name" value="23S rRNA (Uracil(1939)-C(5))-methyltransferase RlmD"/>
    <property type="match status" value="1"/>
</dbReference>
<dbReference type="FunFam" id="2.40.50.140:FF:000097">
    <property type="entry name" value="23S rRNA (uracil(1939)-C(5))-methyltransferase RlmD"/>
    <property type="match status" value="1"/>
</dbReference>
<dbReference type="FunFam" id="2.40.50.1070:FF:000003">
    <property type="entry name" value="23S rRNA (Uracil-5-)-methyltransferase RumA"/>
    <property type="match status" value="1"/>
</dbReference>
<dbReference type="Gene3D" id="2.40.50.1070">
    <property type="match status" value="1"/>
</dbReference>
<dbReference type="Gene3D" id="2.40.50.140">
    <property type="entry name" value="Nucleic acid-binding proteins"/>
    <property type="match status" value="1"/>
</dbReference>
<dbReference type="Gene3D" id="3.40.50.150">
    <property type="entry name" value="Vaccinia Virus protein VP39"/>
    <property type="match status" value="1"/>
</dbReference>
<dbReference type="InterPro" id="IPR030390">
    <property type="entry name" value="MeTrfase_TrmA_AS"/>
</dbReference>
<dbReference type="InterPro" id="IPR030391">
    <property type="entry name" value="MeTrfase_TrmA_CS"/>
</dbReference>
<dbReference type="InterPro" id="IPR012340">
    <property type="entry name" value="NA-bd_OB-fold"/>
</dbReference>
<dbReference type="InterPro" id="IPR029063">
    <property type="entry name" value="SAM-dependent_MTases_sf"/>
</dbReference>
<dbReference type="InterPro" id="IPR002792">
    <property type="entry name" value="TRAM_dom"/>
</dbReference>
<dbReference type="InterPro" id="IPR010280">
    <property type="entry name" value="U5_MeTrfase_fam"/>
</dbReference>
<dbReference type="NCBIfam" id="TIGR00479">
    <property type="entry name" value="rumA"/>
    <property type="match status" value="1"/>
</dbReference>
<dbReference type="PANTHER" id="PTHR11061">
    <property type="entry name" value="RNA M5U METHYLTRANSFERASE"/>
    <property type="match status" value="1"/>
</dbReference>
<dbReference type="PANTHER" id="PTHR11061:SF30">
    <property type="entry name" value="TRNA (URACIL(54)-C(5))-METHYLTRANSFERASE"/>
    <property type="match status" value="1"/>
</dbReference>
<dbReference type="Pfam" id="PF05958">
    <property type="entry name" value="tRNA_U5-meth_tr"/>
    <property type="match status" value="1"/>
</dbReference>
<dbReference type="SUPFAM" id="SSF50249">
    <property type="entry name" value="Nucleic acid-binding proteins"/>
    <property type="match status" value="1"/>
</dbReference>
<dbReference type="SUPFAM" id="SSF53335">
    <property type="entry name" value="S-adenosyl-L-methionine-dependent methyltransferases"/>
    <property type="match status" value="1"/>
</dbReference>
<dbReference type="PROSITE" id="PS51687">
    <property type="entry name" value="SAM_MT_RNA_M5U"/>
    <property type="match status" value="1"/>
</dbReference>
<dbReference type="PROSITE" id="PS50926">
    <property type="entry name" value="TRAM"/>
    <property type="match status" value="1"/>
</dbReference>
<dbReference type="PROSITE" id="PS01230">
    <property type="entry name" value="TRMA_1"/>
    <property type="match status" value="1"/>
</dbReference>
<dbReference type="PROSITE" id="PS01231">
    <property type="entry name" value="TRMA_2"/>
    <property type="match status" value="1"/>
</dbReference>
<protein>
    <recommendedName>
        <fullName>Uncharacterized RNA methyltransferase SE_1582</fullName>
        <ecNumber>2.1.1.-</ecNumber>
    </recommendedName>
</protein>
<name>Y1582_STAES</name>
<sequence length="456" mass="52395">METIKKNEVKTGKVIDLTHEGHGVVKVDRYPIFIPNALIDEEIKFKLIKVKKNFAIGKLIEVISESDDRVTPPCIYYAKCGGCQLQHMTYRAQLDMKREQVVNLFHRKGPFENTVIKETIGMVNPWRYRNKSQIPVGQSNSNQVIMGFYRQRSHDIIDMDSCLIQDRQHQEVMNRVKYWLNELNISIYNEKTKTGLIRHLVVRTGYHTDEMMVIFVTNGATFKQSELLVNKLKKEFPNITSIKQNINNSHSNVIMGRQSMTLYGKDKIEDQLSEVTYHISDLSFYQINSSQTEKLYQQALNYAQLTGKEIVLDTYCGIGTIGLYMAPLAKHVYGVEVVPQAIKDAEDNATKNQLKNTTFECGKAEDVILTWKSQGIKPDVVMVDPPRKGCDETFLTTLLKLNPKRIVYISCNPSTQQRDAQILAEQYELVEITPVDMFPQTTHIETVALFVRKEEE</sequence>
<proteinExistence type="inferred from homology"/>